<proteinExistence type="evidence at transcript level"/>
<keyword id="KW-0028">Amino-acid biosynthesis</keyword>
<keyword id="KW-0100">Branched-chain amino acid biosynthesis</keyword>
<keyword id="KW-0150">Chloroplast</keyword>
<keyword id="KW-0412">Isoleucine biosynthesis</keyword>
<keyword id="KW-0456">Lyase</keyword>
<keyword id="KW-0934">Plastid</keyword>
<keyword id="KW-0663">Pyridoxal phosphate</keyword>
<keyword id="KW-1185">Reference proteome</keyword>
<keyword id="KW-0677">Repeat</keyword>
<keyword id="KW-0346">Stress response</keyword>
<reference key="1">
    <citation type="journal article" date="1992" name="Plant Cell">
        <title>General roles of abscisic and jasmonic acids in gene activation as a result of mechanical wounding.</title>
        <authorList>
            <person name="Hildmann T."/>
            <person name="Ebneth M."/>
            <person name="Pena-Cortes H."/>
            <person name="Sanchez-Serrano J.J."/>
            <person name="Willmitzer L."/>
            <person name="Prat S."/>
        </authorList>
    </citation>
    <scope>NUCLEOTIDE SEQUENCE [MRNA]</scope>
    <scope>TISSUE SPECIFICITY</scope>
    <scope>INDUCTION</scope>
    <source>
        <strain evidence="6">cv. Berolina</strain>
        <tissue evidence="6">Leaf</tissue>
    </source>
</reference>
<reference key="2">
    <citation type="journal article" date="1995" name="Plant J.">
        <title>Expression of an amino acid biosynthesis gene in tomato flowers: developmental upregulation and MeJa response are parenchyma-specific and mutually compatible.</title>
        <authorList>
            <person name="Samach A."/>
            <person name="Broday L."/>
            <person name="Hareven D."/>
            <person name="Lifschitz E."/>
        </authorList>
    </citation>
    <scope>TISSUE SPECIFICITY</scope>
</reference>
<organism>
    <name type="scientific">Solanum tuberosum</name>
    <name type="common">Potato</name>
    <dbReference type="NCBI Taxonomy" id="4113"/>
    <lineage>
        <taxon>Eukaryota</taxon>
        <taxon>Viridiplantae</taxon>
        <taxon>Streptophyta</taxon>
        <taxon>Embryophyta</taxon>
        <taxon>Tracheophyta</taxon>
        <taxon>Spermatophyta</taxon>
        <taxon>Magnoliopsida</taxon>
        <taxon>eudicotyledons</taxon>
        <taxon>Gunneridae</taxon>
        <taxon>Pentapetalae</taxon>
        <taxon>asterids</taxon>
        <taxon>lamiids</taxon>
        <taxon>Solanales</taxon>
        <taxon>Solanaceae</taxon>
        <taxon>Solanoideae</taxon>
        <taxon>Solaneae</taxon>
        <taxon>Solanum</taxon>
    </lineage>
</organism>
<accession>P31212</accession>
<name>TD_SOLTU</name>
<comment type="catalytic activity">
    <reaction evidence="2">
        <text>L-threonine = 2-oxobutanoate + NH4(+)</text>
        <dbReference type="Rhea" id="RHEA:22108"/>
        <dbReference type="ChEBI" id="CHEBI:16763"/>
        <dbReference type="ChEBI" id="CHEBI:28938"/>
        <dbReference type="ChEBI" id="CHEBI:57926"/>
        <dbReference type="EC" id="4.3.1.19"/>
    </reaction>
</comment>
<comment type="cofactor">
    <cofactor evidence="1">
        <name>pyridoxal 5'-phosphate</name>
        <dbReference type="ChEBI" id="CHEBI:597326"/>
    </cofactor>
</comment>
<comment type="pathway">
    <text>Amino-acid biosynthesis; L-isoleucine biosynthesis; 2-oxobutanoate from L-threonine: step 1/1.</text>
</comment>
<comment type="subunit">
    <text evidence="2">Homotetramer.</text>
</comment>
<comment type="subcellular location">
    <subcellularLocation>
        <location evidence="7">Plastid</location>
        <location evidence="7">Chloroplast</location>
    </subcellularLocation>
</comment>
<comment type="tissue specificity">
    <text evidence="4 5">Floral buds of untreated plants. After ABA treatment or mechanical wounding is mostly accumulated in leaves, to a lesser extent in stems, but not in roots (PubMed:1392612). Expressed in anthers, carpel leaves, pith cells, sepals and petals. Not expressed in stomium, vascular bundles, epidermal cells or pollen mother cells (PubMed:7550377).</text>
</comment>
<comment type="induction">
    <text evidence="4">By abscisic acid (ABA), jasmonic acid (JA) and wounding.</text>
</comment>
<comment type="similarity">
    <text evidence="7">Belongs to the serine/threonine dehydratase family.</text>
</comment>
<evidence type="ECO:0000250" key="1">
    <source>
        <dbReference type="UniProtKB" id="P04968"/>
    </source>
</evidence>
<evidence type="ECO:0000250" key="2">
    <source>
        <dbReference type="UniProtKB" id="P25306"/>
    </source>
</evidence>
<evidence type="ECO:0000255" key="3">
    <source>
        <dbReference type="PROSITE-ProRule" id="PRU01008"/>
    </source>
</evidence>
<evidence type="ECO:0000269" key="4">
    <source>
    </source>
</evidence>
<evidence type="ECO:0000269" key="5">
    <source>
    </source>
</evidence>
<evidence type="ECO:0000303" key="6">
    <source>
    </source>
</evidence>
<evidence type="ECO:0000305" key="7"/>
<feature type="chain" id="PRO_0000185581" description="Threonine dehydratase biosynthetic, chloroplastic">
    <location>
        <begin position="1" status="less than"/>
        <end position="359"/>
    </location>
</feature>
<feature type="domain" description="ACT-like 1" evidence="3">
    <location>
        <begin position="184"/>
        <end position="256"/>
    </location>
</feature>
<feature type="domain" description="ACT-like 2" evidence="3">
    <location>
        <begin position="278"/>
        <end position="349"/>
    </location>
</feature>
<feature type="non-terminal residue">
    <location>
        <position position="1"/>
    </location>
</feature>
<sequence length="359" mass="39088">PFDAPGVIKGQGTIGTEINRQLKDIHAVFVPVGGGGLISGVAAYFTQVAPHTKIIGVEPYGAASMTLSLYEGHRVKLENVDTFADGVAVALVGEYTFAKCQELIDGMVLVRNDGISAAIKDVYDEGRNILETSGAVAIAGAAAYCEFYNIKNENIVAIASGANMDFSKLHKVTELAELGSDNEALLATFMIEQPGSFKTFAKLVGSMNITEVTYRFTSERKEALVLYRVDVDEKSDLEEMIKKLNSSNMKTFNFSHNELVAEHIKHLVGGSASISDEIFGEFIFPEKAGTLSTFLEAFSPRWNITLCRYRDQGDINGNVLVGFQVPQSEMDEFKSQADGLGYPYELDNSNEAFNIVVAE</sequence>
<dbReference type="EC" id="4.3.1.19" evidence="2"/>
<dbReference type="EMBL" id="X67846">
    <property type="protein sequence ID" value="CAA48039.1"/>
    <property type="molecule type" value="mRNA"/>
</dbReference>
<dbReference type="PIR" id="PQ0468">
    <property type="entry name" value="PQ0468"/>
</dbReference>
<dbReference type="SMR" id="P31212"/>
<dbReference type="STRING" id="4113.P31212"/>
<dbReference type="PaxDb" id="4113-PGSC0003DMT400033801"/>
<dbReference type="eggNOG" id="KOG1250">
    <property type="taxonomic scope" value="Eukaryota"/>
</dbReference>
<dbReference type="InParanoid" id="P31212"/>
<dbReference type="UniPathway" id="UPA00047">
    <property type="reaction ID" value="UER00054"/>
</dbReference>
<dbReference type="Proteomes" id="UP000011115">
    <property type="component" value="Unassembled WGS sequence"/>
</dbReference>
<dbReference type="ExpressionAtlas" id="P31212">
    <property type="expression patterns" value="baseline"/>
</dbReference>
<dbReference type="GO" id="GO:0009507">
    <property type="term" value="C:chloroplast"/>
    <property type="evidence" value="ECO:0007669"/>
    <property type="project" value="UniProtKB-SubCell"/>
</dbReference>
<dbReference type="GO" id="GO:0030170">
    <property type="term" value="F:pyridoxal phosphate binding"/>
    <property type="evidence" value="ECO:0000250"/>
    <property type="project" value="UniProtKB"/>
</dbReference>
<dbReference type="GO" id="GO:0004794">
    <property type="term" value="F:threonine deaminase activity"/>
    <property type="evidence" value="ECO:0000250"/>
    <property type="project" value="UniProtKB"/>
</dbReference>
<dbReference type="GO" id="GO:0009097">
    <property type="term" value="P:isoleucine biosynthetic process"/>
    <property type="evidence" value="ECO:0000250"/>
    <property type="project" value="UniProtKB"/>
</dbReference>
<dbReference type="GO" id="GO:0009737">
    <property type="term" value="P:response to abscisic acid"/>
    <property type="evidence" value="ECO:0000270"/>
    <property type="project" value="UniProtKB"/>
</dbReference>
<dbReference type="GO" id="GO:0009753">
    <property type="term" value="P:response to jasmonic acid"/>
    <property type="evidence" value="ECO:0000270"/>
    <property type="project" value="UniProtKB"/>
</dbReference>
<dbReference type="GO" id="GO:0009611">
    <property type="term" value="P:response to wounding"/>
    <property type="evidence" value="ECO:0000270"/>
    <property type="project" value="UniProtKB"/>
</dbReference>
<dbReference type="CDD" id="cd04907">
    <property type="entry name" value="ACT_ThrD-I_2"/>
    <property type="match status" value="1"/>
</dbReference>
<dbReference type="FunFam" id="3.40.1020.10:FF:000003">
    <property type="entry name" value="Threonine dehydratase"/>
    <property type="match status" value="1"/>
</dbReference>
<dbReference type="Gene3D" id="3.40.50.1100">
    <property type="match status" value="1"/>
</dbReference>
<dbReference type="Gene3D" id="3.40.1020.10">
    <property type="entry name" value="Biosynthetic Threonine Deaminase, Domain 3"/>
    <property type="match status" value="1"/>
</dbReference>
<dbReference type="InterPro" id="IPR045865">
    <property type="entry name" value="ACT-like_dom_sf"/>
</dbReference>
<dbReference type="InterPro" id="IPR050147">
    <property type="entry name" value="Ser/Thr_Dehydratase"/>
</dbReference>
<dbReference type="InterPro" id="IPR001721">
    <property type="entry name" value="TD_ACT-like"/>
</dbReference>
<dbReference type="InterPro" id="IPR038110">
    <property type="entry name" value="TD_ACT-like_sf"/>
</dbReference>
<dbReference type="InterPro" id="IPR001926">
    <property type="entry name" value="TrpB-like_PALP"/>
</dbReference>
<dbReference type="InterPro" id="IPR036052">
    <property type="entry name" value="TrpB-like_PALP_sf"/>
</dbReference>
<dbReference type="PANTHER" id="PTHR48078:SF10">
    <property type="entry name" value="THREONINE DEHYDRATASE 2 BIOSYNTHETIC, CHLOROPLASTIC"/>
    <property type="match status" value="1"/>
</dbReference>
<dbReference type="PANTHER" id="PTHR48078">
    <property type="entry name" value="THREONINE DEHYDRATASE, MITOCHONDRIAL-RELATED"/>
    <property type="match status" value="1"/>
</dbReference>
<dbReference type="Pfam" id="PF00291">
    <property type="entry name" value="PALP"/>
    <property type="match status" value="1"/>
</dbReference>
<dbReference type="Pfam" id="PF00585">
    <property type="entry name" value="Thr_dehydrat_C"/>
    <property type="match status" value="2"/>
</dbReference>
<dbReference type="SUPFAM" id="SSF55021">
    <property type="entry name" value="ACT-like"/>
    <property type="match status" value="1"/>
</dbReference>
<dbReference type="SUPFAM" id="SSF53686">
    <property type="entry name" value="Tryptophan synthase beta subunit-like PLP-dependent enzymes"/>
    <property type="match status" value="1"/>
</dbReference>
<dbReference type="PROSITE" id="PS51672">
    <property type="entry name" value="ACT_LIKE"/>
    <property type="match status" value="2"/>
</dbReference>
<protein>
    <recommendedName>
        <fullName evidence="7">Threonine dehydratase biosynthetic, chloroplastic</fullName>
        <ecNumber evidence="2">4.3.1.19</ecNumber>
    </recommendedName>
    <alternativeName>
        <fullName evidence="7">Threonine deaminase</fullName>
    </alternativeName>
</protein>
<gene>
    <name evidence="7" type="primary">TD</name>
</gene>